<gene>
    <name evidence="2" type="primary">fen</name>
    <name type="ordered locus">Cmaq_0040</name>
</gene>
<name>FEN_CALMQ</name>
<evidence type="ECO:0000250" key="1"/>
<evidence type="ECO:0000255" key="2">
    <source>
        <dbReference type="HAMAP-Rule" id="MF_00614"/>
    </source>
</evidence>
<keyword id="KW-0227">DNA damage</keyword>
<keyword id="KW-0234">DNA repair</keyword>
<keyword id="KW-0235">DNA replication</keyword>
<keyword id="KW-0255">Endonuclease</keyword>
<keyword id="KW-0269">Exonuclease</keyword>
<keyword id="KW-0378">Hydrolase</keyword>
<keyword id="KW-0460">Magnesium</keyword>
<keyword id="KW-0479">Metal-binding</keyword>
<keyword id="KW-0540">Nuclease</keyword>
<keyword id="KW-1185">Reference proteome</keyword>
<comment type="function">
    <text evidence="1">Structure-specific nuclease with 5'-flap endonuclease and 5'-3' exonuclease activities involved in DNA replication and repair. During DNA replication, cleaves the 5'-overhanging flap structure that is generated by displacement synthesis when DNA polymerase encounters the 5'-end of a downstream Okazaki fragment. Binds the unpaired 3'-DNA end and kinks the DNA to facilitate 5' cleavage specificity. Cleaves one nucleotide into the double-stranded DNA from the junction in flap DNA, leaving a nick for ligation. Also involved in the base excision repair (BER) pathway. Acts as a genome stabilization factor that prevents flaps from equilibrating into structures that lead to duplications and deletions. Also possesses 5'-3' exonuclease activity on nicked or gapped double-stranded DNA (By similarity).</text>
</comment>
<comment type="cofactor">
    <cofactor evidence="2">
        <name>Mg(2+)</name>
        <dbReference type="ChEBI" id="CHEBI:18420"/>
    </cofactor>
    <text evidence="2">Binds 2 magnesium ions per subunit. They probably participate in the reaction catalyzed by the enzyme. May bind an additional third magnesium ion after substrate binding.</text>
</comment>
<comment type="subunit">
    <text evidence="2">Interacts with PCNA. PCNA stimulates the nuclease activity without altering cleavage specificity.</text>
</comment>
<comment type="similarity">
    <text evidence="2">Belongs to the XPG/RAD2 endonuclease family. FEN1 subfamily.</text>
</comment>
<dbReference type="EC" id="3.1.-.-" evidence="2"/>
<dbReference type="EMBL" id="CP000852">
    <property type="protein sequence ID" value="ABW00894.1"/>
    <property type="molecule type" value="Genomic_DNA"/>
</dbReference>
<dbReference type="RefSeq" id="WP_012185114.1">
    <property type="nucleotide sequence ID" value="NC_009954.1"/>
</dbReference>
<dbReference type="SMR" id="A8M9L3"/>
<dbReference type="STRING" id="397948.Cmaq_0040"/>
<dbReference type="GeneID" id="5710318"/>
<dbReference type="KEGG" id="cma:Cmaq_0040"/>
<dbReference type="eggNOG" id="arCOG04050">
    <property type="taxonomic scope" value="Archaea"/>
</dbReference>
<dbReference type="HOGENOM" id="CLU_032444_0_0_2"/>
<dbReference type="OrthoDB" id="9593at2157"/>
<dbReference type="Proteomes" id="UP000001137">
    <property type="component" value="Chromosome"/>
</dbReference>
<dbReference type="GO" id="GO:0008409">
    <property type="term" value="F:5'-3' exonuclease activity"/>
    <property type="evidence" value="ECO:0007669"/>
    <property type="project" value="UniProtKB-UniRule"/>
</dbReference>
<dbReference type="GO" id="GO:0017108">
    <property type="term" value="F:5'-flap endonuclease activity"/>
    <property type="evidence" value="ECO:0007669"/>
    <property type="project" value="UniProtKB-UniRule"/>
</dbReference>
<dbReference type="GO" id="GO:0003677">
    <property type="term" value="F:DNA binding"/>
    <property type="evidence" value="ECO:0007669"/>
    <property type="project" value="UniProtKB-UniRule"/>
</dbReference>
<dbReference type="GO" id="GO:0000287">
    <property type="term" value="F:magnesium ion binding"/>
    <property type="evidence" value="ECO:0007669"/>
    <property type="project" value="UniProtKB-UniRule"/>
</dbReference>
<dbReference type="GO" id="GO:0006281">
    <property type="term" value="P:DNA repair"/>
    <property type="evidence" value="ECO:0007669"/>
    <property type="project" value="UniProtKB-UniRule"/>
</dbReference>
<dbReference type="GO" id="GO:0043137">
    <property type="term" value="P:DNA replication, removal of RNA primer"/>
    <property type="evidence" value="ECO:0007669"/>
    <property type="project" value="UniProtKB-UniRule"/>
</dbReference>
<dbReference type="CDD" id="cd09903">
    <property type="entry name" value="H3TH_FEN1-Arc"/>
    <property type="match status" value="1"/>
</dbReference>
<dbReference type="CDD" id="cd09867">
    <property type="entry name" value="PIN_FEN1"/>
    <property type="match status" value="1"/>
</dbReference>
<dbReference type="FunFam" id="1.10.150.20:FF:000087">
    <property type="entry name" value="Flap endonuclease 1"/>
    <property type="match status" value="1"/>
</dbReference>
<dbReference type="FunFam" id="3.40.50.1010:FF:000016">
    <property type="entry name" value="Flap endonuclease 1"/>
    <property type="match status" value="1"/>
</dbReference>
<dbReference type="Gene3D" id="1.10.150.20">
    <property type="entry name" value="5' to 3' exonuclease, C-terminal subdomain"/>
    <property type="match status" value="1"/>
</dbReference>
<dbReference type="Gene3D" id="3.40.50.1010">
    <property type="entry name" value="5'-nuclease"/>
    <property type="match status" value="1"/>
</dbReference>
<dbReference type="HAMAP" id="MF_00614">
    <property type="entry name" value="Fen"/>
    <property type="match status" value="1"/>
</dbReference>
<dbReference type="InterPro" id="IPR036279">
    <property type="entry name" value="5-3_exonuclease_C_sf"/>
</dbReference>
<dbReference type="InterPro" id="IPR023426">
    <property type="entry name" value="Flap_endonuc"/>
</dbReference>
<dbReference type="InterPro" id="IPR019973">
    <property type="entry name" value="Flap_endonuc_arc"/>
</dbReference>
<dbReference type="InterPro" id="IPR008918">
    <property type="entry name" value="HhH2"/>
</dbReference>
<dbReference type="InterPro" id="IPR029060">
    <property type="entry name" value="PIN-like_dom_sf"/>
</dbReference>
<dbReference type="InterPro" id="IPR006086">
    <property type="entry name" value="XPG-I_dom"/>
</dbReference>
<dbReference type="InterPro" id="IPR006084">
    <property type="entry name" value="XPG/Rad2"/>
</dbReference>
<dbReference type="InterPro" id="IPR019974">
    <property type="entry name" value="XPG_CS"/>
</dbReference>
<dbReference type="InterPro" id="IPR006085">
    <property type="entry name" value="XPG_DNA_repair_N"/>
</dbReference>
<dbReference type="NCBIfam" id="TIGR03674">
    <property type="entry name" value="fen_arch"/>
    <property type="match status" value="1"/>
</dbReference>
<dbReference type="PANTHER" id="PTHR11081:SF9">
    <property type="entry name" value="FLAP ENDONUCLEASE 1"/>
    <property type="match status" value="1"/>
</dbReference>
<dbReference type="PANTHER" id="PTHR11081">
    <property type="entry name" value="FLAP ENDONUCLEASE FAMILY MEMBER"/>
    <property type="match status" value="1"/>
</dbReference>
<dbReference type="Pfam" id="PF00867">
    <property type="entry name" value="XPG_I"/>
    <property type="match status" value="1"/>
</dbReference>
<dbReference type="Pfam" id="PF00752">
    <property type="entry name" value="XPG_N"/>
    <property type="match status" value="1"/>
</dbReference>
<dbReference type="PRINTS" id="PR00853">
    <property type="entry name" value="XPGRADSUPER"/>
</dbReference>
<dbReference type="SMART" id="SM00279">
    <property type="entry name" value="HhH2"/>
    <property type="match status" value="1"/>
</dbReference>
<dbReference type="SMART" id="SM00484">
    <property type="entry name" value="XPGI"/>
    <property type="match status" value="1"/>
</dbReference>
<dbReference type="SMART" id="SM00485">
    <property type="entry name" value="XPGN"/>
    <property type="match status" value="1"/>
</dbReference>
<dbReference type="SUPFAM" id="SSF47807">
    <property type="entry name" value="5' to 3' exonuclease, C-terminal subdomain"/>
    <property type="match status" value="1"/>
</dbReference>
<dbReference type="SUPFAM" id="SSF88723">
    <property type="entry name" value="PIN domain-like"/>
    <property type="match status" value="1"/>
</dbReference>
<dbReference type="PROSITE" id="PS00841">
    <property type="entry name" value="XPG_1"/>
    <property type="match status" value="1"/>
</dbReference>
<feature type="chain" id="PRO_1000082576" description="Flap endonuclease 1">
    <location>
        <begin position="1"/>
        <end position="350"/>
    </location>
</feature>
<feature type="region of interest" description="N-domain">
    <location>
        <begin position="1"/>
        <end position="102"/>
    </location>
</feature>
<feature type="region of interest" description="I-domain">
    <location>
        <begin position="120"/>
        <end position="263"/>
    </location>
</feature>
<feature type="binding site" evidence="2">
    <location>
        <position position="31"/>
    </location>
    <ligand>
        <name>Mg(2+)</name>
        <dbReference type="ChEBI" id="CHEBI:18420"/>
        <label>1</label>
    </ligand>
</feature>
<feature type="binding site" evidence="2">
    <location>
        <position position="84"/>
    </location>
    <ligand>
        <name>Mg(2+)</name>
        <dbReference type="ChEBI" id="CHEBI:18420"/>
        <label>1</label>
    </ligand>
</feature>
<feature type="binding site" evidence="2">
    <location>
        <position position="156"/>
    </location>
    <ligand>
        <name>Mg(2+)</name>
        <dbReference type="ChEBI" id="CHEBI:18420"/>
        <label>1</label>
    </ligand>
</feature>
<feature type="binding site" evidence="2">
    <location>
        <position position="158"/>
    </location>
    <ligand>
        <name>Mg(2+)</name>
        <dbReference type="ChEBI" id="CHEBI:18420"/>
        <label>1</label>
    </ligand>
</feature>
<feature type="binding site" evidence="2">
    <location>
        <position position="177"/>
    </location>
    <ligand>
        <name>Mg(2+)</name>
        <dbReference type="ChEBI" id="CHEBI:18420"/>
        <label>2</label>
    </ligand>
</feature>
<feature type="binding site" evidence="2">
    <location>
        <position position="179"/>
    </location>
    <ligand>
        <name>Mg(2+)</name>
        <dbReference type="ChEBI" id="CHEBI:18420"/>
        <label>2</label>
    </ligand>
</feature>
<feature type="binding site" evidence="2">
    <location>
        <position position="241"/>
    </location>
    <ligand>
        <name>Mg(2+)</name>
        <dbReference type="ChEBI" id="CHEBI:18420"/>
        <label>2</label>
    </ligand>
</feature>
<organism>
    <name type="scientific">Caldivirga maquilingensis (strain ATCC 700844 / DSM 13496 / JCM 10307 / IC-167)</name>
    <dbReference type="NCBI Taxonomy" id="397948"/>
    <lineage>
        <taxon>Archaea</taxon>
        <taxon>Thermoproteota</taxon>
        <taxon>Thermoprotei</taxon>
        <taxon>Thermoproteales</taxon>
        <taxon>Thermoproteaceae</taxon>
        <taxon>Caldivirga</taxon>
    </lineage>
</organism>
<reference key="1">
    <citation type="submission" date="2007-10" db="EMBL/GenBank/DDBJ databases">
        <title>Complete sequence of Caldivirga maquilingensis IC-167.</title>
        <authorList>
            <consortium name="US DOE Joint Genome Institute"/>
            <person name="Copeland A."/>
            <person name="Lucas S."/>
            <person name="Lapidus A."/>
            <person name="Barry K."/>
            <person name="Glavina del Rio T."/>
            <person name="Dalin E."/>
            <person name="Tice H."/>
            <person name="Pitluck S."/>
            <person name="Saunders E."/>
            <person name="Brettin T."/>
            <person name="Bruce D."/>
            <person name="Detter J.C."/>
            <person name="Han C."/>
            <person name="Schmutz J."/>
            <person name="Larimer F."/>
            <person name="Land M."/>
            <person name="Hauser L."/>
            <person name="Kyrpides N."/>
            <person name="Ivanova N."/>
            <person name="Biddle J.F."/>
            <person name="Zhang Z."/>
            <person name="Fitz-Gibbon S.T."/>
            <person name="Lowe T.M."/>
            <person name="Saltikov C."/>
            <person name="House C.H."/>
            <person name="Richardson P."/>
        </authorList>
    </citation>
    <scope>NUCLEOTIDE SEQUENCE [LARGE SCALE GENOMIC DNA]</scope>
    <source>
        <strain>ATCC 700844 / DSM 13496 / JCM 10307 / IC-167</strain>
    </source>
</reference>
<sequence length="350" mass="39604">MGVTELGKLIPDNLRRRVSLEQLNGKLIALDAYNALYQFLASIRQPDGTPLMDSQGRVTSHLSGLLYRTINLLEYGIKPVYVFDGKPPELKLIEIEKRRRVREKAVEDWIKAVEEGKKSEARKYAQRALFITSDMVDEAKRLLDSMGVPWVQAPSEGEAQAAYMASKGIVWAAGSQDYDSFLFGAPRLVRNLTISGRRKLPGRDEYVEVTPELIELNDVLKALRLRDRGQLIDLAILLGTDYNPEGIPGIGPQRALRLIQEYGSLDKLMNTVLKNAQFPVDPFKIREFFLNPPVTQEVNVKFKEPNEDEVVRLLVEEHDFSQDRVKNALERLRKSMGKAKGSTTLDSFFG</sequence>
<proteinExistence type="inferred from homology"/>
<protein>
    <recommendedName>
        <fullName evidence="2">Flap endonuclease 1</fullName>
        <shortName evidence="2">FEN-1</shortName>
        <ecNumber evidence="2">3.1.-.-</ecNumber>
    </recommendedName>
    <alternativeName>
        <fullName evidence="2">Flap structure-specific endonuclease 1</fullName>
    </alternativeName>
</protein>
<accession>A8M9L3</accession>